<feature type="chain" id="PRO_1000205802" description="UDP-3-O-acyl-N-acetylglucosamine deacetylase">
    <location>
        <begin position="1"/>
        <end position="303"/>
    </location>
</feature>
<feature type="active site" description="Proton donor" evidence="1">
    <location>
        <position position="264"/>
    </location>
</feature>
<feature type="binding site" evidence="1">
    <location>
        <position position="78"/>
    </location>
    <ligand>
        <name>Zn(2+)</name>
        <dbReference type="ChEBI" id="CHEBI:29105"/>
    </ligand>
</feature>
<feature type="binding site" evidence="1">
    <location>
        <position position="237"/>
    </location>
    <ligand>
        <name>Zn(2+)</name>
        <dbReference type="ChEBI" id="CHEBI:29105"/>
    </ligand>
</feature>
<feature type="binding site" evidence="1">
    <location>
        <position position="241"/>
    </location>
    <ligand>
        <name>Zn(2+)</name>
        <dbReference type="ChEBI" id="CHEBI:29105"/>
    </ligand>
</feature>
<gene>
    <name evidence="1" type="primary">lpxC</name>
    <name type="ordered locus">Avin_13320</name>
</gene>
<sequence>MIKQRTLKNIIRATGVGLHSGEKVYLTLKPAPVDTGIVFRRIDLDPVVDIPARAENVGETTMSTTLVKGDVKVDTVEHLLSAMAGLGIDNAYVELSAPEVPIMDGSAGPFVFLIQSAGLQEQEACKRFIRIKREVAVEEDDKRAVFLPFDGFKVSFEIDFDHPVFRGRTQTASIDFSSTSFVKEVSRARTFGFMRDIEFLRSHNLALGGSVDNAIVVDENRVLNEDGLRYEDEFVKHKILDAIGDLYLLGNSLIGEFRGFKSGHALNNRLLRALLEQKDAWEVVTFEDAMSAPISYVRPIAAV</sequence>
<organism>
    <name type="scientific">Azotobacter vinelandii (strain DJ / ATCC BAA-1303)</name>
    <dbReference type="NCBI Taxonomy" id="322710"/>
    <lineage>
        <taxon>Bacteria</taxon>
        <taxon>Pseudomonadati</taxon>
        <taxon>Pseudomonadota</taxon>
        <taxon>Gammaproteobacteria</taxon>
        <taxon>Pseudomonadales</taxon>
        <taxon>Pseudomonadaceae</taxon>
        <taxon>Azotobacter</taxon>
    </lineage>
</organism>
<keyword id="KW-0378">Hydrolase</keyword>
<keyword id="KW-0441">Lipid A biosynthesis</keyword>
<keyword id="KW-0444">Lipid biosynthesis</keyword>
<keyword id="KW-0443">Lipid metabolism</keyword>
<keyword id="KW-0479">Metal-binding</keyword>
<keyword id="KW-0862">Zinc</keyword>
<dbReference type="EC" id="3.5.1.108" evidence="1"/>
<dbReference type="EMBL" id="CP001157">
    <property type="protein sequence ID" value="ACO77558.1"/>
    <property type="molecule type" value="Genomic_DNA"/>
</dbReference>
<dbReference type="RefSeq" id="WP_012699978.1">
    <property type="nucleotide sequence ID" value="NC_012560.1"/>
</dbReference>
<dbReference type="SMR" id="C1DQA6"/>
<dbReference type="STRING" id="322710.Avin_13320"/>
<dbReference type="EnsemblBacteria" id="ACO77558">
    <property type="protein sequence ID" value="ACO77558"/>
    <property type="gene ID" value="Avin_13320"/>
</dbReference>
<dbReference type="GeneID" id="88184647"/>
<dbReference type="KEGG" id="avn:Avin_13320"/>
<dbReference type="eggNOG" id="COG0774">
    <property type="taxonomic scope" value="Bacteria"/>
</dbReference>
<dbReference type="HOGENOM" id="CLU_046528_1_0_6"/>
<dbReference type="OrthoDB" id="9802746at2"/>
<dbReference type="UniPathway" id="UPA00359">
    <property type="reaction ID" value="UER00478"/>
</dbReference>
<dbReference type="Proteomes" id="UP000002424">
    <property type="component" value="Chromosome"/>
</dbReference>
<dbReference type="GO" id="GO:0016020">
    <property type="term" value="C:membrane"/>
    <property type="evidence" value="ECO:0007669"/>
    <property type="project" value="GOC"/>
</dbReference>
<dbReference type="GO" id="GO:0046872">
    <property type="term" value="F:metal ion binding"/>
    <property type="evidence" value="ECO:0007669"/>
    <property type="project" value="UniProtKB-KW"/>
</dbReference>
<dbReference type="GO" id="GO:0103117">
    <property type="term" value="F:UDP-3-O-acyl-N-acetylglucosamine deacetylase activity"/>
    <property type="evidence" value="ECO:0007669"/>
    <property type="project" value="UniProtKB-UniRule"/>
</dbReference>
<dbReference type="GO" id="GO:0009245">
    <property type="term" value="P:lipid A biosynthetic process"/>
    <property type="evidence" value="ECO:0007669"/>
    <property type="project" value="UniProtKB-UniRule"/>
</dbReference>
<dbReference type="FunFam" id="3.30.1700.10:FF:000001">
    <property type="entry name" value="UDP-3-O-acyl-N-acetylglucosamine deacetylase"/>
    <property type="match status" value="1"/>
</dbReference>
<dbReference type="FunFam" id="3.30.230.20:FF:000001">
    <property type="entry name" value="UDP-3-O-acyl-N-acetylglucosamine deacetylase"/>
    <property type="match status" value="1"/>
</dbReference>
<dbReference type="Gene3D" id="3.30.230.20">
    <property type="entry name" value="lpxc deacetylase, domain 1"/>
    <property type="match status" value="1"/>
</dbReference>
<dbReference type="Gene3D" id="3.30.1700.10">
    <property type="entry name" value="lpxc deacetylase, domain 2"/>
    <property type="match status" value="1"/>
</dbReference>
<dbReference type="HAMAP" id="MF_00388">
    <property type="entry name" value="LpxC"/>
    <property type="match status" value="1"/>
</dbReference>
<dbReference type="InterPro" id="IPR020568">
    <property type="entry name" value="Ribosomal_Su5_D2-typ_SF"/>
</dbReference>
<dbReference type="InterPro" id="IPR004463">
    <property type="entry name" value="UDP-acyl_GlcNac_deAcase"/>
</dbReference>
<dbReference type="InterPro" id="IPR011334">
    <property type="entry name" value="UDP-acyl_GlcNac_deAcase_C"/>
</dbReference>
<dbReference type="InterPro" id="IPR015870">
    <property type="entry name" value="UDP-acyl_N-AcGlcN_deAcase_N"/>
</dbReference>
<dbReference type="NCBIfam" id="TIGR00325">
    <property type="entry name" value="lpxC"/>
    <property type="match status" value="1"/>
</dbReference>
<dbReference type="PANTHER" id="PTHR33694">
    <property type="entry name" value="UDP-3-O-ACYL-N-ACETYLGLUCOSAMINE DEACETYLASE 1, MITOCHONDRIAL-RELATED"/>
    <property type="match status" value="1"/>
</dbReference>
<dbReference type="PANTHER" id="PTHR33694:SF1">
    <property type="entry name" value="UDP-3-O-ACYL-N-ACETYLGLUCOSAMINE DEACETYLASE 1, MITOCHONDRIAL-RELATED"/>
    <property type="match status" value="1"/>
</dbReference>
<dbReference type="Pfam" id="PF03331">
    <property type="entry name" value="LpxC"/>
    <property type="match status" value="1"/>
</dbReference>
<dbReference type="SUPFAM" id="SSF54211">
    <property type="entry name" value="Ribosomal protein S5 domain 2-like"/>
    <property type="match status" value="2"/>
</dbReference>
<proteinExistence type="inferred from homology"/>
<protein>
    <recommendedName>
        <fullName evidence="1">UDP-3-O-acyl-N-acetylglucosamine deacetylase</fullName>
        <shortName evidence="1">UDP-3-O-acyl-GlcNAc deacetylase</shortName>
        <ecNumber evidence="1">3.5.1.108</ecNumber>
    </recommendedName>
    <alternativeName>
        <fullName evidence="1">UDP-3-O-[R-3-hydroxymyristoyl]-N-acetylglucosamine deacetylase</fullName>
    </alternativeName>
</protein>
<evidence type="ECO:0000255" key="1">
    <source>
        <dbReference type="HAMAP-Rule" id="MF_00388"/>
    </source>
</evidence>
<reference key="1">
    <citation type="journal article" date="2009" name="J. Bacteriol.">
        <title>Genome sequence of Azotobacter vinelandii, an obligate aerobe specialized to support diverse anaerobic metabolic processes.</title>
        <authorList>
            <person name="Setubal J.C."/>
            <person name="Dos Santos P."/>
            <person name="Goldman B.S."/>
            <person name="Ertesvaag H."/>
            <person name="Espin G."/>
            <person name="Rubio L.M."/>
            <person name="Valla S."/>
            <person name="Almeida N.F."/>
            <person name="Balasubramanian D."/>
            <person name="Cromes L."/>
            <person name="Curatti L."/>
            <person name="Du Z."/>
            <person name="Godsy E."/>
            <person name="Goodner B."/>
            <person name="Hellner-Burris K."/>
            <person name="Hernandez J.A."/>
            <person name="Houmiel K."/>
            <person name="Imperial J."/>
            <person name="Kennedy C."/>
            <person name="Larson T.J."/>
            <person name="Latreille P."/>
            <person name="Ligon L.S."/>
            <person name="Lu J."/>
            <person name="Maerk M."/>
            <person name="Miller N.M."/>
            <person name="Norton S."/>
            <person name="O'Carroll I.P."/>
            <person name="Paulsen I."/>
            <person name="Raulfs E.C."/>
            <person name="Roemer R."/>
            <person name="Rosser J."/>
            <person name="Segura D."/>
            <person name="Slater S."/>
            <person name="Stricklin S.L."/>
            <person name="Studholme D.J."/>
            <person name="Sun J."/>
            <person name="Viana C.J."/>
            <person name="Wallin E."/>
            <person name="Wang B."/>
            <person name="Wheeler C."/>
            <person name="Zhu H."/>
            <person name="Dean D.R."/>
            <person name="Dixon R."/>
            <person name="Wood D."/>
        </authorList>
    </citation>
    <scope>NUCLEOTIDE SEQUENCE [LARGE SCALE GENOMIC DNA]</scope>
    <source>
        <strain>DJ / ATCC BAA-1303</strain>
    </source>
</reference>
<name>LPXC_AZOVD</name>
<comment type="function">
    <text evidence="1">Catalyzes the hydrolysis of UDP-3-O-myristoyl-N-acetylglucosamine to form UDP-3-O-myristoylglucosamine and acetate, the committed step in lipid A biosynthesis.</text>
</comment>
<comment type="catalytic activity">
    <reaction evidence="1">
        <text>a UDP-3-O-[(3R)-3-hydroxyacyl]-N-acetyl-alpha-D-glucosamine + H2O = a UDP-3-O-[(3R)-3-hydroxyacyl]-alpha-D-glucosamine + acetate</text>
        <dbReference type="Rhea" id="RHEA:67816"/>
        <dbReference type="ChEBI" id="CHEBI:15377"/>
        <dbReference type="ChEBI" id="CHEBI:30089"/>
        <dbReference type="ChEBI" id="CHEBI:137740"/>
        <dbReference type="ChEBI" id="CHEBI:173225"/>
        <dbReference type="EC" id="3.5.1.108"/>
    </reaction>
</comment>
<comment type="cofactor">
    <cofactor evidence="1">
        <name>Zn(2+)</name>
        <dbReference type="ChEBI" id="CHEBI:29105"/>
    </cofactor>
</comment>
<comment type="pathway">
    <text evidence="1">Glycolipid biosynthesis; lipid IV(A) biosynthesis; lipid IV(A) from (3R)-3-hydroxytetradecanoyl-[acyl-carrier-protein] and UDP-N-acetyl-alpha-D-glucosamine: step 2/6.</text>
</comment>
<comment type="similarity">
    <text evidence="1">Belongs to the LpxC family.</text>
</comment>
<accession>C1DQA6</accession>